<proteinExistence type="evidence at transcript level"/>
<comment type="function">
    <text evidence="1">Putative oxophytodienoate reductase that may be involved in the biosynthesis or metabolism of oxylipin signaling molecules.</text>
</comment>
<comment type="cofactor">
    <cofactor>
        <name>FMN</name>
        <dbReference type="ChEBI" id="CHEBI:58210"/>
    </cofactor>
</comment>
<comment type="similarity">
    <text evidence="3">Belongs to the NADH:flavin oxidoreductase/NADH oxidase family.</text>
</comment>
<protein>
    <recommendedName>
        <fullName>Putative 12-oxophytodienoate reductase 9</fullName>
        <ecNumber>1.3.1.-</ecNumber>
    </recommendedName>
    <alternativeName>
        <fullName>OPDA-reductase 9</fullName>
        <shortName>OsOPR9</shortName>
    </alternativeName>
</protein>
<organism>
    <name type="scientific">Oryza sativa subsp. japonica</name>
    <name type="common">Rice</name>
    <dbReference type="NCBI Taxonomy" id="39947"/>
    <lineage>
        <taxon>Eukaryota</taxon>
        <taxon>Viridiplantae</taxon>
        <taxon>Streptophyta</taxon>
        <taxon>Embryophyta</taxon>
        <taxon>Tracheophyta</taxon>
        <taxon>Spermatophyta</taxon>
        <taxon>Magnoliopsida</taxon>
        <taxon>Liliopsida</taxon>
        <taxon>Poales</taxon>
        <taxon>Poaceae</taxon>
        <taxon>BOP clade</taxon>
        <taxon>Oryzoideae</taxon>
        <taxon>Oryzeae</taxon>
        <taxon>Oryzinae</taxon>
        <taxon>Oryza</taxon>
        <taxon>Oryza sativa</taxon>
    </lineage>
</organism>
<gene>
    <name type="primary">OPR9</name>
    <name type="ordered locus">Os01g0370000</name>
    <name type="ordered locus">LOC_Os01g27240</name>
    <name type="ORF">P0043B10.48</name>
    <name type="ORF">P0493G01.8</name>
</gene>
<evidence type="ECO:0000250" key="1"/>
<evidence type="ECO:0000256" key="2">
    <source>
        <dbReference type="SAM" id="MobiDB-lite"/>
    </source>
</evidence>
<evidence type="ECO:0000305" key="3"/>
<name>OPR9_ORYSJ</name>
<feature type="chain" id="PRO_0000410715" description="Putative 12-oxophytodienoate reductase 9">
    <location>
        <begin position="1"/>
        <end position="412"/>
    </location>
</feature>
<feature type="region of interest" description="Disordered" evidence="2">
    <location>
        <begin position="339"/>
        <end position="412"/>
    </location>
</feature>
<feature type="compositionally biased region" description="Basic residues" evidence="2">
    <location>
        <begin position="360"/>
        <end position="387"/>
    </location>
</feature>
<feature type="binding site" evidence="1">
    <location>
        <begin position="25"/>
        <end position="27"/>
    </location>
    <ligand>
        <name>FMN</name>
        <dbReference type="ChEBI" id="CHEBI:58210"/>
    </ligand>
</feature>
<feature type="binding site" evidence="1">
    <location>
        <position position="58"/>
    </location>
    <ligand>
        <name>FMN</name>
        <dbReference type="ChEBI" id="CHEBI:58210"/>
    </ligand>
</feature>
<feature type="binding site" evidence="1">
    <location>
        <position position="177"/>
    </location>
    <ligand>
        <name>FMN</name>
        <dbReference type="ChEBI" id="CHEBI:58210"/>
    </ligand>
</feature>
<feature type="binding site" evidence="1">
    <location>
        <begin position="242"/>
        <end position="245"/>
    </location>
    <ligand>
        <name>substrate</name>
    </ligand>
</feature>
<feature type="binding site" evidence="1">
    <location>
        <position position="294"/>
    </location>
    <ligand>
        <name>FMN</name>
        <dbReference type="ChEBI" id="CHEBI:58210"/>
    </ligand>
</feature>
<feature type="binding site" evidence="1">
    <location>
        <position position="334"/>
    </location>
    <ligand>
        <name>substrate</name>
    </ligand>
</feature>
<feature type="binding site" evidence="1">
    <location>
        <begin position="379"/>
        <end position="380"/>
    </location>
    <ligand>
        <name>FMN</name>
        <dbReference type="ChEBI" id="CHEBI:58210"/>
    </ligand>
</feature>
<feature type="sequence conflict" description="In Ref. 4; AK121554." evidence="3" ref="4">
    <original>K</original>
    <variation>E</variation>
    <location>
        <position position="70"/>
    </location>
</feature>
<feature type="sequence conflict" description="In Ref. 4; AK121554." evidence="3" ref="4">
    <original>P</original>
    <variation>R</variation>
    <location>
        <position position="209"/>
    </location>
</feature>
<reference key="1">
    <citation type="journal article" date="2002" name="Nature">
        <title>The genome sequence and structure of rice chromosome 1.</title>
        <authorList>
            <person name="Sasaki T."/>
            <person name="Matsumoto T."/>
            <person name="Yamamoto K."/>
            <person name="Sakata K."/>
            <person name="Baba T."/>
            <person name="Katayose Y."/>
            <person name="Wu J."/>
            <person name="Niimura Y."/>
            <person name="Cheng Z."/>
            <person name="Nagamura Y."/>
            <person name="Antonio B.A."/>
            <person name="Kanamori H."/>
            <person name="Hosokawa S."/>
            <person name="Masukawa M."/>
            <person name="Arikawa K."/>
            <person name="Chiden Y."/>
            <person name="Hayashi M."/>
            <person name="Okamoto M."/>
            <person name="Ando T."/>
            <person name="Aoki H."/>
            <person name="Arita K."/>
            <person name="Hamada M."/>
            <person name="Harada C."/>
            <person name="Hijishita S."/>
            <person name="Honda M."/>
            <person name="Ichikawa Y."/>
            <person name="Idonuma A."/>
            <person name="Iijima M."/>
            <person name="Ikeda M."/>
            <person name="Ikeno M."/>
            <person name="Ito S."/>
            <person name="Ito T."/>
            <person name="Ito Y."/>
            <person name="Ito Y."/>
            <person name="Iwabuchi A."/>
            <person name="Kamiya K."/>
            <person name="Karasawa W."/>
            <person name="Katagiri S."/>
            <person name="Kikuta A."/>
            <person name="Kobayashi N."/>
            <person name="Kono I."/>
            <person name="Machita K."/>
            <person name="Maehara T."/>
            <person name="Mizuno H."/>
            <person name="Mizubayashi T."/>
            <person name="Mukai Y."/>
            <person name="Nagasaki H."/>
            <person name="Nakashima M."/>
            <person name="Nakama Y."/>
            <person name="Nakamichi Y."/>
            <person name="Nakamura M."/>
            <person name="Namiki N."/>
            <person name="Negishi M."/>
            <person name="Ohta I."/>
            <person name="Ono N."/>
            <person name="Saji S."/>
            <person name="Sakai K."/>
            <person name="Shibata M."/>
            <person name="Shimokawa T."/>
            <person name="Shomura A."/>
            <person name="Song J."/>
            <person name="Takazaki Y."/>
            <person name="Terasawa K."/>
            <person name="Tsuji K."/>
            <person name="Waki K."/>
            <person name="Yamagata H."/>
            <person name="Yamane H."/>
            <person name="Yoshiki S."/>
            <person name="Yoshihara R."/>
            <person name="Yukawa K."/>
            <person name="Zhong H."/>
            <person name="Iwama H."/>
            <person name="Endo T."/>
            <person name="Ito H."/>
            <person name="Hahn J.H."/>
            <person name="Kim H.-I."/>
            <person name="Eun M.-Y."/>
            <person name="Yano M."/>
            <person name="Jiang J."/>
            <person name="Gojobori T."/>
        </authorList>
    </citation>
    <scope>NUCLEOTIDE SEQUENCE [LARGE SCALE GENOMIC DNA]</scope>
    <source>
        <strain>cv. Nipponbare</strain>
    </source>
</reference>
<reference key="2">
    <citation type="journal article" date="2005" name="Nature">
        <title>The map-based sequence of the rice genome.</title>
        <authorList>
            <consortium name="International rice genome sequencing project (IRGSP)"/>
        </authorList>
    </citation>
    <scope>NUCLEOTIDE SEQUENCE [LARGE SCALE GENOMIC DNA]</scope>
    <source>
        <strain>cv. Nipponbare</strain>
    </source>
</reference>
<reference key="3">
    <citation type="journal article" date="2013" name="Rice">
        <title>Improvement of the Oryza sativa Nipponbare reference genome using next generation sequence and optical map data.</title>
        <authorList>
            <person name="Kawahara Y."/>
            <person name="de la Bastide M."/>
            <person name="Hamilton J.P."/>
            <person name="Kanamori H."/>
            <person name="McCombie W.R."/>
            <person name="Ouyang S."/>
            <person name="Schwartz D.C."/>
            <person name="Tanaka T."/>
            <person name="Wu J."/>
            <person name="Zhou S."/>
            <person name="Childs K.L."/>
            <person name="Davidson R.M."/>
            <person name="Lin H."/>
            <person name="Quesada-Ocampo L."/>
            <person name="Vaillancourt B."/>
            <person name="Sakai H."/>
            <person name="Lee S.S."/>
            <person name="Kim J."/>
            <person name="Numa H."/>
            <person name="Itoh T."/>
            <person name="Buell C.R."/>
            <person name="Matsumoto T."/>
        </authorList>
    </citation>
    <scope>GENOME REANNOTATION</scope>
    <source>
        <strain>cv. Nipponbare</strain>
    </source>
</reference>
<reference key="4">
    <citation type="journal article" date="2003" name="Science">
        <title>Collection, mapping, and annotation of over 28,000 cDNA clones from japonica rice.</title>
        <authorList>
            <consortium name="The rice full-length cDNA consortium"/>
        </authorList>
    </citation>
    <scope>NUCLEOTIDE SEQUENCE [LARGE SCALE MRNA]</scope>
    <source>
        <strain>cv. Nipponbare</strain>
    </source>
</reference>
<dbReference type="EC" id="1.3.1.-"/>
<dbReference type="EMBL" id="AP002914">
    <property type="protein sequence ID" value="BAD61319.1"/>
    <property type="molecule type" value="Genomic_DNA"/>
</dbReference>
<dbReference type="EMBL" id="AP003236">
    <property type="protein sequence ID" value="BAD61457.1"/>
    <property type="molecule type" value="Genomic_DNA"/>
</dbReference>
<dbReference type="EMBL" id="AP014957">
    <property type="protein sequence ID" value="BAS72171.1"/>
    <property type="molecule type" value="Genomic_DNA"/>
</dbReference>
<dbReference type="EMBL" id="AK121554">
    <property type="status" value="NOT_ANNOTATED_CDS"/>
    <property type="molecule type" value="mRNA"/>
</dbReference>
<dbReference type="SMR" id="Q5ZC83"/>
<dbReference type="FunCoup" id="Q5ZC83">
    <property type="interactions" value="6"/>
</dbReference>
<dbReference type="STRING" id="39947.Q5ZC83"/>
<dbReference type="PaxDb" id="39947-Q5ZC83"/>
<dbReference type="EnsemblPlants" id="Os01t0370000-01">
    <property type="protein sequence ID" value="Os01t0370000-01"/>
    <property type="gene ID" value="Os01g0370000"/>
</dbReference>
<dbReference type="Gramene" id="Os01t0370000-01">
    <property type="protein sequence ID" value="Os01t0370000-01"/>
    <property type="gene ID" value="Os01g0370000"/>
</dbReference>
<dbReference type="eggNOG" id="KOG0134">
    <property type="taxonomic scope" value="Eukaryota"/>
</dbReference>
<dbReference type="HOGENOM" id="CLU_012153_0_2_1"/>
<dbReference type="InParanoid" id="Q5ZC83"/>
<dbReference type="OMA" id="NGPIHRQ"/>
<dbReference type="Proteomes" id="UP000000763">
    <property type="component" value="Chromosome 1"/>
</dbReference>
<dbReference type="Proteomes" id="UP000059680">
    <property type="component" value="Chromosome 1"/>
</dbReference>
<dbReference type="GO" id="GO:0010181">
    <property type="term" value="F:FMN binding"/>
    <property type="evidence" value="ECO:0007669"/>
    <property type="project" value="InterPro"/>
</dbReference>
<dbReference type="GO" id="GO:0016491">
    <property type="term" value="F:oxidoreductase activity"/>
    <property type="evidence" value="ECO:0000318"/>
    <property type="project" value="GO_Central"/>
</dbReference>
<dbReference type="GO" id="GO:0006633">
    <property type="term" value="P:fatty acid biosynthetic process"/>
    <property type="evidence" value="ECO:0007669"/>
    <property type="project" value="UniProtKB-KW"/>
</dbReference>
<dbReference type="GO" id="GO:0031408">
    <property type="term" value="P:oxylipin biosynthetic process"/>
    <property type="evidence" value="ECO:0007669"/>
    <property type="project" value="UniProtKB-KW"/>
</dbReference>
<dbReference type="Gene3D" id="3.20.20.70">
    <property type="entry name" value="Aldolase class I"/>
    <property type="match status" value="2"/>
</dbReference>
<dbReference type="InterPro" id="IPR013785">
    <property type="entry name" value="Aldolase_TIM"/>
</dbReference>
<dbReference type="InterPro" id="IPR001155">
    <property type="entry name" value="OxRdtase_FMN_N"/>
</dbReference>
<dbReference type="InterPro" id="IPR045247">
    <property type="entry name" value="Oye-like"/>
</dbReference>
<dbReference type="PANTHER" id="PTHR22893:SF96">
    <property type="entry name" value="12-OXOPHYTODIENOATE REDUCTASE 10-RELATED"/>
    <property type="match status" value="1"/>
</dbReference>
<dbReference type="PANTHER" id="PTHR22893">
    <property type="entry name" value="NADH OXIDOREDUCTASE-RELATED"/>
    <property type="match status" value="1"/>
</dbReference>
<dbReference type="Pfam" id="PF00724">
    <property type="entry name" value="Oxidored_FMN"/>
    <property type="match status" value="2"/>
</dbReference>
<dbReference type="SUPFAM" id="SSF51395">
    <property type="entry name" value="FMN-linked oxidoreductases"/>
    <property type="match status" value="2"/>
</dbReference>
<sequence length="412" mass="45102">MEDTHLLTPYKMGQLNLAHRIVHAPVSRFRSYGSMPQPHNLLYYAQRATPGALLIAEASAVSYAALGRSKDDAANGPIHRQRPGPPGFLFGTNLTDYNSATDGVKATESGVNDRNNLSKWWFMSRLNESGNAGGAEESHYTLPSSLDAPGLWNQEQIEAWRPIVDAVHAKGALFFCQIWHNGRVFSTDNPVTPQVSYFGNTDDLAPAAPQRLETGEIVQIVEDFRVAARNAIKAGFDGVEIHAANGHLLHQFMKASVNDRTDEYGGSVENRCRITVDAMSAVAEEIGADRVGVRLSPFADHCREEGTDPEEVALHLIGVMNGLGVLYCHVIEPRCMREQHRGAPRAPQRPAPPAPVQKGVPRHVHCERRVRPGGRGQGGRRRLRRPGVVREIVPGQPRPAGEVQAEGGSERV</sequence>
<keyword id="KW-0275">Fatty acid biosynthesis</keyword>
<keyword id="KW-0276">Fatty acid metabolism</keyword>
<keyword id="KW-0285">Flavoprotein</keyword>
<keyword id="KW-0288">FMN</keyword>
<keyword id="KW-0444">Lipid biosynthesis</keyword>
<keyword id="KW-0443">Lipid metabolism</keyword>
<keyword id="KW-0521">NADP</keyword>
<keyword id="KW-0560">Oxidoreductase</keyword>
<keyword id="KW-0925">Oxylipin biosynthesis</keyword>
<keyword id="KW-1185">Reference proteome</keyword>
<accession>Q5ZC83</accession>
<accession>A0A0P0V2P6</accession>